<dbReference type="EC" id="6.3.2.2"/>
<dbReference type="EMBL" id="Y10848">
    <property type="protein sequence ID" value="CAA71801.1"/>
    <property type="molecule type" value="mRNA"/>
</dbReference>
<dbReference type="EMBL" id="AJ563921">
    <property type="protein sequence ID" value="CAD91712.1"/>
    <property type="molecule type" value="mRNA"/>
</dbReference>
<dbReference type="EMBL" id="X95563">
    <property type="protein sequence ID" value="CAA64808.1"/>
    <property type="molecule type" value="mRNA"/>
</dbReference>
<dbReference type="PDB" id="2GWC">
    <property type="method" value="X-ray"/>
    <property type="resolution" value="2.18 A"/>
    <property type="chains" value="A/B/C/D/E/F/G/H=66-514"/>
</dbReference>
<dbReference type="PDB" id="2GWD">
    <property type="method" value="X-ray"/>
    <property type="resolution" value="2.09 A"/>
    <property type="chains" value="A=66-514"/>
</dbReference>
<dbReference type="PDB" id="6GMO">
    <property type="method" value="X-ray"/>
    <property type="resolution" value="1.75 A"/>
    <property type="chains" value="A/B=72-514"/>
</dbReference>
<dbReference type="PDBsum" id="2GWC"/>
<dbReference type="PDBsum" id="2GWD"/>
<dbReference type="PDBsum" id="6GMO"/>
<dbReference type="SMR" id="O23736"/>
<dbReference type="BRENDA" id="6.3.2.2">
    <property type="organism ID" value="941"/>
</dbReference>
<dbReference type="UniPathway" id="UPA00142">
    <property type="reaction ID" value="UER00209"/>
</dbReference>
<dbReference type="EvolutionaryTrace" id="O23736"/>
<dbReference type="GO" id="GO:0009507">
    <property type="term" value="C:chloroplast"/>
    <property type="evidence" value="ECO:0007669"/>
    <property type="project" value="UniProtKB-SubCell"/>
</dbReference>
<dbReference type="GO" id="GO:0005524">
    <property type="term" value="F:ATP binding"/>
    <property type="evidence" value="ECO:0007669"/>
    <property type="project" value="UniProtKB-KW"/>
</dbReference>
<dbReference type="GO" id="GO:0004357">
    <property type="term" value="F:glutamate-cysteine ligase activity"/>
    <property type="evidence" value="ECO:0007669"/>
    <property type="project" value="UniProtKB-EC"/>
</dbReference>
<dbReference type="GO" id="GO:0006750">
    <property type="term" value="P:glutathione biosynthetic process"/>
    <property type="evidence" value="ECO:0007669"/>
    <property type="project" value="UniProtKB-UniPathway"/>
</dbReference>
<dbReference type="GO" id="GO:0043436">
    <property type="term" value="P:oxoacid metabolic process"/>
    <property type="evidence" value="ECO:0007669"/>
    <property type="project" value="UniProtKB-ARBA"/>
</dbReference>
<dbReference type="FunFam" id="3.30.590.20:FF:000003">
    <property type="entry name" value="Glutamate--cysteine ligase"/>
    <property type="match status" value="1"/>
</dbReference>
<dbReference type="Gene3D" id="3.30.590.20">
    <property type="match status" value="1"/>
</dbReference>
<dbReference type="InterPro" id="IPR035434">
    <property type="entry name" value="GCL_bact_plant"/>
</dbReference>
<dbReference type="InterPro" id="IPR006336">
    <property type="entry name" value="GCS2"/>
</dbReference>
<dbReference type="InterPro" id="IPR014746">
    <property type="entry name" value="Gln_synth/guanido_kin_cat_dom"/>
</dbReference>
<dbReference type="InterPro" id="IPR011556">
    <property type="entry name" value="Glut_cys_lig_pln_type"/>
</dbReference>
<dbReference type="NCBIfam" id="TIGR01436">
    <property type="entry name" value="glu_cys_lig_pln"/>
    <property type="match status" value="1"/>
</dbReference>
<dbReference type="PANTHER" id="PTHR34378">
    <property type="entry name" value="GLUTAMATE--CYSTEINE LIGASE, CHLOROPLASTIC"/>
    <property type="match status" value="1"/>
</dbReference>
<dbReference type="PANTHER" id="PTHR34378:SF1">
    <property type="entry name" value="GLUTAMATE--CYSTEINE LIGASE, CHLOROPLASTIC"/>
    <property type="match status" value="1"/>
</dbReference>
<dbReference type="Pfam" id="PF04107">
    <property type="entry name" value="GCS2"/>
    <property type="match status" value="1"/>
</dbReference>
<dbReference type="PIRSF" id="PIRSF017901">
    <property type="entry name" value="GCL"/>
    <property type="match status" value="1"/>
</dbReference>
<dbReference type="SUPFAM" id="SSF55931">
    <property type="entry name" value="Glutamine synthetase/guanido kinase"/>
    <property type="match status" value="1"/>
</dbReference>
<keyword id="KW-0002">3D-structure</keyword>
<keyword id="KW-0067">ATP-binding</keyword>
<keyword id="KW-0150">Chloroplast</keyword>
<keyword id="KW-1015">Disulfide bond</keyword>
<keyword id="KW-0317">Glutathione biosynthesis</keyword>
<keyword id="KW-0436">Ligase</keyword>
<keyword id="KW-0547">Nucleotide-binding</keyword>
<keyword id="KW-0934">Plastid</keyword>
<keyword id="KW-0809">Transit peptide</keyword>
<feature type="transit peptide" description="Chloroplast" evidence="2">
    <location>
        <begin position="1"/>
        <end position="55"/>
    </location>
</feature>
<feature type="chain" id="PRO_0000013055" description="Glutamate--cysteine ligase, chloroplastic">
    <location>
        <begin position="56"/>
        <end position="514"/>
    </location>
</feature>
<feature type="disulfide bond" evidence="3">
    <location>
        <begin position="178"/>
        <end position="398"/>
    </location>
</feature>
<feature type="disulfide bond" evidence="3">
    <location>
        <begin position="341"/>
        <end position="356"/>
    </location>
</feature>
<feature type="mutagenesis site" description="Decreased activity." evidence="3">
    <original>C</original>
    <variation>S</variation>
    <location>
        <position position="178"/>
    </location>
</feature>
<feature type="mutagenesis site" description="Reduces activity with cysteine as substrate." evidence="3">
    <original>R</original>
    <variation>K</variation>
    <location>
        <position position="220"/>
    </location>
</feature>
<feature type="mutagenesis site" description="Decreased activity." evidence="3">
    <original>C</original>
    <variation>S</variation>
    <location>
        <position position="341"/>
    </location>
</feature>
<feature type="mutagenesis site" description="Decreased activity." evidence="3">
    <original>C</original>
    <variation>A</variation>
    <location>
        <position position="356"/>
    </location>
</feature>
<feature type="sequence conflict" description="In Ref. 2; CAA64808." evidence="6" ref="2">
    <original>K</original>
    <variation>R</variation>
    <location>
        <position position="139"/>
    </location>
</feature>
<feature type="sequence conflict" description="In Ref. 2; CAA64808." evidence="6" ref="2">
    <original>T</original>
    <variation>I</variation>
    <location>
        <position position="215"/>
    </location>
</feature>
<feature type="sequence conflict" description="In Ref. 2; CAA64808." evidence="6" ref="2">
    <original>M</original>
    <variation>T</variation>
    <location>
        <position position="257"/>
    </location>
</feature>
<feature type="helix" evidence="8">
    <location>
        <begin position="83"/>
        <end position="91"/>
    </location>
</feature>
<feature type="helix" evidence="8">
    <location>
        <begin position="97"/>
        <end position="99"/>
    </location>
</feature>
<feature type="strand" evidence="8">
    <location>
        <begin position="102"/>
        <end position="112"/>
    </location>
</feature>
<feature type="turn" evidence="8">
    <location>
        <begin position="113"/>
        <end position="115"/>
    </location>
</feature>
<feature type="helix" evidence="8">
    <location>
        <begin position="121"/>
        <end position="135"/>
    </location>
</feature>
<feature type="strand" evidence="8">
    <location>
        <begin position="138"/>
        <end position="142"/>
    </location>
</feature>
<feature type="strand" evidence="8">
    <location>
        <begin position="145"/>
        <end position="151"/>
    </location>
</feature>
<feature type="strand" evidence="8">
    <location>
        <begin position="154"/>
        <end position="158"/>
    </location>
</feature>
<feature type="strand" evidence="8">
    <location>
        <begin position="164"/>
        <end position="167"/>
    </location>
</feature>
<feature type="strand" evidence="8">
    <location>
        <begin position="171"/>
        <end position="173"/>
    </location>
</feature>
<feature type="helix" evidence="8">
    <location>
        <begin position="174"/>
        <end position="192"/>
    </location>
</feature>
<feature type="helix" evidence="8">
    <location>
        <begin position="193"/>
        <end position="195"/>
    </location>
</feature>
<feature type="strand" evidence="8">
    <location>
        <begin position="197"/>
        <end position="200"/>
    </location>
</feature>
<feature type="helix" evidence="8">
    <location>
        <begin position="210"/>
        <end position="212"/>
    </location>
</feature>
<feature type="helix" evidence="8">
    <location>
        <begin position="219"/>
        <end position="231"/>
    </location>
</feature>
<feature type="helix" evidence="8">
    <location>
        <begin position="235"/>
        <end position="241"/>
    </location>
</feature>
<feature type="strand" evidence="8">
    <location>
        <begin position="244"/>
        <end position="249"/>
    </location>
</feature>
<feature type="helix" evidence="8">
    <location>
        <begin position="254"/>
        <end position="274"/>
    </location>
</feature>
<feature type="helix" evidence="8">
    <location>
        <begin position="291"/>
        <end position="295"/>
    </location>
</feature>
<feature type="helix" evidence="7">
    <location>
        <begin position="301"/>
        <end position="303"/>
    </location>
</feature>
<feature type="helix" evidence="8">
    <location>
        <begin position="308"/>
        <end position="311"/>
    </location>
</feature>
<feature type="helix" evidence="8">
    <location>
        <begin position="317"/>
        <end position="326"/>
    </location>
</feature>
<feature type="strand" evidence="8">
    <location>
        <begin position="331"/>
        <end position="334"/>
    </location>
</feature>
<feature type="strand" evidence="8">
    <location>
        <begin position="337"/>
        <end position="340"/>
    </location>
</feature>
<feature type="helix" evidence="8">
    <location>
        <begin position="346"/>
        <end position="350"/>
    </location>
</feature>
<feature type="helix" evidence="8">
    <location>
        <begin position="364"/>
        <end position="371"/>
    </location>
</feature>
<feature type="strand" evidence="8">
    <location>
        <begin position="377"/>
        <end position="386"/>
    </location>
</feature>
<feature type="helix" evidence="8">
    <location>
        <begin position="394"/>
        <end position="408"/>
    </location>
</feature>
<feature type="helix" evidence="8">
    <location>
        <begin position="411"/>
        <end position="421"/>
    </location>
</feature>
<feature type="helix" evidence="8">
    <location>
        <begin position="426"/>
        <end position="439"/>
    </location>
</feature>
<feature type="helix" evidence="8">
    <location>
        <begin position="440"/>
        <end position="442"/>
    </location>
</feature>
<feature type="strand" evidence="8">
    <location>
        <begin position="443"/>
        <end position="445"/>
    </location>
</feature>
<feature type="helix" evidence="8">
    <location>
        <begin position="450"/>
        <end position="468"/>
    </location>
</feature>
<feature type="helix" evidence="8">
    <location>
        <begin position="473"/>
        <end position="476"/>
    </location>
</feature>
<feature type="helix" evidence="8">
    <location>
        <begin position="477"/>
        <end position="485"/>
    </location>
</feature>
<feature type="helix" evidence="8">
    <location>
        <begin position="489"/>
        <end position="497"/>
    </location>
</feature>
<feature type="turn" evidence="8">
    <location>
        <begin position="498"/>
        <end position="503"/>
    </location>
</feature>
<feature type="helix" evidence="8">
    <location>
        <begin position="508"/>
        <end position="511"/>
    </location>
</feature>
<proteinExistence type="evidence at protein level"/>
<evidence type="ECO:0000250" key="1"/>
<evidence type="ECO:0000255" key="2"/>
<evidence type="ECO:0000269" key="3">
    <source>
    </source>
</evidence>
<evidence type="ECO:0000269" key="4">
    <source>
    </source>
</evidence>
<evidence type="ECO:0000269" key="5">
    <source>
    </source>
</evidence>
<evidence type="ECO:0000305" key="6"/>
<evidence type="ECO:0007829" key="7">
    <source>
        <dbReference type="PDB" id="2GWD"/>
    </source>
</evidence>
<evidence type="ECO:0007829" key="8">
    <source>
        <dbReference type="PDB" id="6GMO"/>
    </source>
</evidence>
<sequence length="514" mass="57903">MALLSQAGGAYTVPSGHVSSRTGTKTVSGCVNVLRMKETYVSSYSRTLSTKSMLKRSKRGHQLIVAASPPTEEAVVATEPLTREDLIAYLASGCKSKEKWRIGTEHEKFGFEVNTLRPMKYDQIAELLNSIAERFEWEKVMEGDKIIGLKQGKQSISLEPGGQFELSGAPLETLHQTCAEVNSHLYQVKAVAEEMGIGFLGMGFQPKWRREDIPTMPKGRYDIMRNYMPKVGSLGLDMMLRTCTVQVNLDFSSEADMIRKFRAGLALQPIATALFANSPFTEGKPNGFLSMRSHIWTDTDKDRTGMLPFVFDDSFGFEQYVDYALDVPMYFAYRNGKYVDCTGMTFRQFLAGKLPCLPGELPTYNDWENHLTTIFPEVRLKRYMEMRGADGGPWRRLCALPAFWVGLLYDEDVLQSVLDLTADWTPAEREMLRNKVPVTGLKTPFRDGLLKHVAEDVLKLAKDGLERRGYKEVGFLNAVTEVVRTGVTPAENLLEMYNGEWGQSVDPVFQELLY</sequence>
<accession>O23736</accession>
<accession>Q43389</accession>
<accession>Q546C7</accession>
<reference key="1">
    <citation type="journal article" date="1998" name="Plant Mol. Biol.">
        <title>cDNA cloning and expression analysis of genes encoding GSH synthesis in roots of the heavy-metal accumulator Brassica juncea L.: evidence for Cd-induction of a putative mitochondrial gamma-glutamylcysteine synthetase isoform.</title>
        <authorList>
            <person name="Schaefer H.J."/>
            <person name="Haag-Kerwer A."/>
            <person name="Rausch T.H."/>
        </authorList>
    </citation>
    <scope>NUCLEOTIDE SEQUENCE [MRNA]</scope>
    <scope>FUNCTION</scope>
    <scope>INDUCTION</scope>
    <source>
        <strain>cv. Vittasso</strain>
        <tissue>Root</tissue>
    </source>
</reference>
<reference key="2">
    <citation type="submission" date="2003-05" db="EMBL/GenBank/DDBJ databases">
        <title>Compartmentation of GSH synthesis in plants: in Arabidopsis thaliana and in Brassica juncea, gamma-glutamylcysteine synthetase (GSH1), the key enzyme of glutathione synthesis, is exclusively localized in plastids.</title>
        <authorList>
            <person name="Wachter A."/>
            <person name="Steininger H."/>
            <person name="Rausch T."/>
            <person name="Bogs J."/>
        </authorList>
    </citation>
    <scope>NUCLEOTIDE SEQUENCE [MRNA]</scope>
</reference>
<reference key="3">
    <citation type="journal article" date="1997" name="FEBS Lett.">
        <title>In seedlings of the heavy metal accumulator Brassica juncea, Cu(2+) differentially affects transcript amounts for gamma-glutamylcysteine synthetase (gamma-ECS) and metallothionein (MT2).</title>
        <authorList>
            <person name="Schaefer H.J."/>
            <person name="Greiner S."/>
            <person name="Rausch T."/>
            <person name="Haag-Kerwer A."/>
        </authorList>
    </citation>
    <scope>NUCLEOTIDE SEQUENCE [MRNA] OF 126-342</scope>
    <scope>FUNCTION</scope>
    <scope>INDUCTION</scope>
    <source>
        <strain>cv. Vittasso</strain>
        <tissue>Leaf</tissue>
    </source>
</reference>
<reference key="4">
    <citation type="journal article" date="2006" name="J. Biol. Chem.">
        <title>Structural basis for the redox control of plant glutamate cysteine ligase.</title>
        <authorList>
            <person name="Hothorn M."/>
            <person name="Wachter A."/>
            <person name="Gromes R."/>
            <person name="Stuwe T."/>
            <person name="Rausch T."/>
            <person name="Scheffzek K."/>
        </authorList>
    </citation>
    <scope>X-RAY CRYSTALLOGRAPHY (2.09 ANGSTROMS) OF 66-514</scope>
    <scope>DISULFIDE BONDS</scope>
    <scope>MUTAGENESIS OF CYS-178; ARG-220; CYS-341 AND CYS-356</scope>
    <scope>SUBUNIT</scope>
</reference>
<comment type="function">
    <text evidence="4 5">Participates in the detoxification process.</text>
</comment>
<comment type="catalytic activity">
    <reaction>
        <text>L-cysteine + L-glutamate + ATP = gamma-L-glutamyl-L-cysteine + ADP + phosphate + H(+)</text>
        <dbReference type="Rhea" id="RHEA:13285"/>
        <dbReference type="ChEBI" id="CHEBI:15378"/>
        <dbReference type="ChEBI" id="CHEBI:29985"/>
        <dbReference type="ChEBI" id="CHEBI:30616"/>
        <dbReference type="ChEBI" id="CHEBI:35235"/>
        <dbReference type="ChEBI" id="CHEBI:43474"/>
        <dbReference type="ChEBI" id="CHEBI:58173"/>
        <dbReference type="ChEBI" id="CHEBI:456216"/>
        <dbReference type="EC" id="6.3.2.2"/>
    </reaction>
</comment>
<comment type="pathway">
    <text>Sulfur metabolism; glutathione biosynthesis; glutathione from L-cysteine and L-glutamate: step 1/2.</text>
</comment>
<comment type="subunit">
    <text evidence="3">Homodimer or monomer when oxidized or reduced, respectively.</text>
</comment>
<comment type="subcellular location">
    <subcellularLocation>
        <location evidence="1">Plastid</location>
        <location evidence="1">Chloroplast</location>
    </subcellularLocation>
</comment>
<comment type="induction">
    <text evidence="4 5">Up-regulated by cadmium and cu(2+).</text>
</comment>
<comment type="PTM">
    <text>The Cys-178-Cys-398 disulfide bridge is known to modulate the enzyme activity according to the redox status. The oxidized form constitutes the active enzyme.</text>
</comment>
<comment type="similarity">
    <text evidence="6">Belongs to the carboxylate-amine ligase family. Glutamate--cysteine ligase type 2 subfamily.</text>
</comment>
<protein>
    <recommendedName>
        <fullName>Glutamate--cysteine ligase, chloroplastic</fullName>
        <ecNumber>6.3.2.2</ecNumber>
    </recommendedName>
    <alternativeName>
        <fullName>Gamma-ECS</fullName>
        <shortName>GCS</shortName>
    </alternativeName>
    <alternativeName>
        <fullName>Gamma-glutamylcysteine synthetase</fullName>
    </alternativeName>
</protein>
<name>GSH1_BRAJU</name>
<gene>
    <name type="primary">GSH1</name>
    <name type="synonym">ECS1</name>
</gene>
<organism>
    <name type="scientific">Brassica juncea</name>
    <name type="common">Indian mustard</name>
    <name type="synonym">Sinapis juncea</name>
    <dbReference type="NCBI Taxonomy" id="3707"/>
    <lineage>
        <taxon>Eukaryota</taxon>
        <taxon>Viridiplantae</taxon>
        <taxon>Streptophyta</taxon>
        <taxon>Embryophyta</taxon>
        <taxon>Tracheophyta</taxon>
        <taxon>Spermatophyta</taxon>
        <taxon>Magnoliopsida</taxon>
        <taxon>eudicotyledons</taxon>
        <taxon>Gunneridae</taxon>
        <taxon>Pentapetalae</taxon>
        <taxon>rosids</taxon>
        <taxon>malvids</taxon>
        <taxon>Brassicales</taxon>
        <taxon>Brassicaceae</taxon>
        <taxon>Brassiceae</taxon>
        <taxon>Brassica</taxon>
    </lineage>
</organism>